<evidence type="ECO:0000255" key="1">
    <source>
        <dbReference type="HAMAP-Rule" id="MF_00122"/>
    </source>
</evidence>
<protein>
    <recommendedName>
        <fullName evidence="1">Aspartyl/glutamyl-tRNA(Asn/Gln) amidotransferase subunit C</fullName>
        <shortName evidence="1">Asp/Glu-ADT subunit C</shortName>
        <ecNumber evidence="1">6.3.5.-</ecNumber>
    </recommendedName>
</protein>
<organism>
    <name type="scientific">Bacillus anthracis</name>
    <dbReference type="NCBI Taxonomy" id="1392"/>
    <lineage>
        <taxon>Bacteria</taxon>
        <taxon>Bacillati</taxon>
        <taxon>Bacillota</taxon>
        <taxon>Bacilli</taxon>
        <taxon>Bacillales</taxon>
        <taxon>Bacillaceae</taxon>
        <taxon>Bacillus</taxon>
        <taxon>Bacillus cereus group</taxon>
    </lineage>
</organism>
<dbReference type="EC" id="6.3.5.-" evidence="1"/>
<dbReference type="EMBL" id="AE016879">
    <property type="protein sequence ID" value="AAP24353.1"/>
    <property type="molecule type" value="Genomic_DNA"/>
</dbReference>
<dbReference type="EMBL" id="AE017334">
    <property type="protein sequence ID" value="AAT29409.1"/>
    <property type="molecule type" value="Genomic_DNA"/>
</dbReference>
<dbReference type="EMBL" id="AE017225">
    <property type="protein sequence ID" value="AAT52636.1"/>
    <property type="molecule type" value="Genomic_DNA"/>
</dbReference>
<dbReference type="RefSeq" id="NP_842867.1">
    <property type="nucleotide sequence ID" value="NC_003997.3"/>
</dbReference>
<dbReference type="RefSeq" id="WP_000086999.1">
    <property type="nucleotide sequence ID" value="NZ_WXXJ01000007.1"/>
</dbReference>
<dbReference type="RefSeq" id="YP_026585.1">
    <property type="nucleotide sequence ID" value="NC_005945.1"/>
</dbReference>
<dbReference type="SMR" id="Q81ZE9"/>
<dbReference type="STRING" id="261594.GBAA_0320"/>
<dbReference type="DNASU" id="1083989"/>
<dbReference type="GeneID" id="93010705"/>
<dbReference type="KEGG" id="ban:BA_0320"/>
<dbReference type="KEGG" id="bar:GBAA_0320"/>
<dbReference type="KEGG" id="bat:BAS0305"/>
<dbReference type="PATRIC" id="fig|198094.11.peg.311"/>
<dbReference type="eggNOG" id="COG0721">
    <property type="taxonomic scope" value="Bacteria"/>
</dbReference>
<dbReference type="HOGENOM" id="CLU_105899_6_1_9"/>
<dbReference type="OMA" id="VTPMAMK"/>
<dbReference type="OrthoDB" id="9813938at2"/>
<dbReference type="Proteomes" id="UP000000427">
    <property type="component" value="Chromosome"/>
</dbReference>
<dbReference type="Proteomes" id="UP000000594">
    <property type="component" value="Chromosome"/>
</dbReference>
<dbReference type="GO" id="GO:0050566">
    <property type="term" value="F:asparaginyl-tRNA synthase (glutamine-hydrolyzing) activity"/>
    <property type="evidence" value="ECO:0007669"/>
    <property type="project" value="RHEA"/>
</dbReference>
<dbReference type="GO" id="GO:0005524">
    <property type="term" value="F:ATP binding"/>
    <property type="evidence" value="ECO:0007669"/>
    <property type="project" value="UniProtKB-KW"/>
</dbReference>
<dbReference type="GO" id="GO:0050567">
    <property type="term" value="F:glutaminyl-tRNA synthase (glutamine-hydrolyzing) activity"/>
    <property type="evidence" value="ECO:0007669"/>
    <property type="project" value="UniProtKB-UniRule"/>
</dbReference>
<dbReference type="GO" id="GO:0070681">
    <property type="term" value="P:glutaminyl-tRNAGln biosynthesis via transamidation"/>
    <property type="evidence" value="ECO:0007669"/>
    <property type="project" value="TreeGrafter"/>
</dbReference>
<dbReference type="GO" id="GO:0006450">
    <property type="term" value="P:regulation of translational fidelity"/>
    <property type="evidence" value="ECO:0007669"/>
    <property type="project" value="InterPro"/>
</dbReference>
<dbReference type="GO" id="GO:0006412">
    <property type="term" value="P:translation"/>
    <property type="evidence" value="ECO:0007669"/>
    <property type="project" value="UniProtKB-UniRule"/>
</dbReference>
<dbReference type="Gene3D" id="1.10.20.60">
    <property type="entry name" value="Glu-tRNAGln amidotransferase C subunit, N-terminal domain"/>
    <property type="match status" value="1"/>
</dbReference>
<dbReference type="HAMAP" id="MF_00122">
    <property type="entry name" value="GatC"/>
    <property type="match status" value="1"/>
</dbReference>
<dbReference type="InterPro" id="IPR036113">
    <property type="entry name" value="Asp/Glu-ADT_sf_sub_c"/>
</dbReference>
<dbReference type="InterPro" id="IPR003837">
    <property type="entry name" value="GatC"/>
</dbReference>
<dbReference type="NCBIfam" id="TIGR00135">
    <property type="entry name" value="gatC"/>
    <property type="match status" value="1"/>
</dbReference>
<dbReference type="PANTHER" id="PTHR15004">
    <property type="entry name" value="GLUTAMYL-TRNA(GLN) AMIDOTRANSFERASE SUBUNIT C, MITOCHONDRIAL"/>
    <property type="match status" value="1"/>
</dbReference>
<dbReference type="PANTHER" id="PTHR15004:SF0">
    <property type="entry name" value="GLUTAMYL-TRNA(GLN) AMIDOTRANSFERASE SUBUNIT C, MITOCHONDRIAL"/>
    <property type="match status" value="1"/>
</dbReference>
<dbReference type="Pfam" id="PF02686">
    <property type="entry name" value="GatC"/>
    <property type="match status" value="1"/>
</dbReference>
<dbReference type="SUPFAM" id="SSF141000">
    <property type="entry name" value="Glu-tRNAGln amidotransferase C subunit"/>
    <property type="match status" value="1"/>
</dbReference>
<proteinExistence type="inferred from homology"/>
<name>GATC_BACAN</name>
<accession>Q81ZE9</accession>
<accession>Q6I495</accession>
<accession>Q6KY00</accession>
<gene>
    <name evidence="1" type="primary">gatC</name>
    <name type="ordered locus">BA_0320</name>
    <name type="ordered locus">GBAA_0320</name>
    <name type="ordered locus">BAS0305</name>
</gene>
<reference key="1">
    <citation type="journal article" date="2003" name="Nature">
        <title>The genome sequence of Bacillus anthracis Ames and comparison to closely related bacteria.</title>
        <authorList>
            <person name="Read T.D."/>
            <person name="Peterson S.N."/>
            <person name="Tourasse N.J."/>
            <person name="Baillie L.W."/>
            <person name="Paulsen I.T."/>
            <person name="Nelson K.E."/>
            <person name="Tettelin H."/>
            <person name="Fouts D.E."/>
            <person name="Eisen J.A."/>
            <person name="Gill S.R."/>
            <person name="Holtzapple E.K."/>
            <person name="Okstad O.A."/>
            <person name="Helgason E."/>
            <person name="Rilstone J."/>
            <person name="Wu M."/>
            <person name="Kolonay J.F."/>
            <person name="Beanan M.J."/>
            <person name="Dodson R.J."/>
            <person name="Brinkac L.M."/>
            <person name="Gwinn M.L."/>
            <person name="DeBoy R.T."/>
            <person name="Madpu R."/>
            <person name="Daugherty S.C."/>
            <person name="Durkin A.S."/>
            <person name="Haft D.H."/>
            <person name="Nelson W.C."/>
            <person name="Peterson J.D."/>
            <person name="Pop M."/>
            <person name="Khouri H.M."/>
            <person name="Radune D."/>
            <person name="Benton J.L."/>
            <person name="Mahamoud Y."/>
            <person name="Jiang L."/>
            <person name="Hance I.R."/>
            <person name="Weidman J.F."/>
            <person name="Berry K.J."/>
            <person name="Plaut R.D."/>
            <person name="Wolf A.M."/>
            <person name="Watkins K.L."/>
            <person name="Nierman W.C."/>
            <person name="Hazen A."/>
            <person name="Cline R.T."/>
            <person name="Redmond C."/>
            <person name="Thwaite J.E."/>
            <person name="White O."/>
            <person name="Salzberg S.L."/>
            <person name="Thomason B."/>
            <person name="Friedlander A.M."/>
            <person name="Koehler T.M."/>
            <person name="Hanna P.C."/>
            <person name="Kolstoe A.-B."/>
            <person name="Fraser C.M."/>
        </authorList>
    </citation>
    <scope>NUCLEOTIDE SEQUENCE [LARGE SCALE GENOMIC DNA]</scope>
    <source>
        <strain>Ames / isolate Porton</strain>
    </source>
</reference>
<reference key="2">
    <citation type="journal article" date="2009" name="J. Bacteriol.">
        <title>The complete genome sequence of Bacillus anthracis Ames 'Ancestor'.</title>
        <authorList>
            <person name="Ravel J."/>
            <person name="Jiang L."/>
            <person name="Stanley S.T."/>
            <person name="Wilson M.R."/>
            <person name="Decker R.S."/>
            <person name="Read T.D."/>
            <person name="Worsham P."/>
            <person name="Keim P.S."/>
            <person name="Salzberg S.L."/>
            <person name="Fraser-Liggett C.M."/>
            <person name="Rasko D.A."/>
        </authorList>
    </citation>
    <scope>NUCLEOTIDE SEQUENCE [LARGE SCALE GENOMIC DNA]</scope>
    <source>
        <strain>Ames ancestor</strain>
    </source>
</reference>
<reference key="3">
    <citation type="submission" date="2004-01" db="EMBL/GenBank/DDBJ databases">
        <title>Complete genome sequence of Bacillus anthracis Sterne.</title>
        <authorList>
            <person name="Brettin T.S."/>
            <person name="Bruce D."/>
            <person name="Challacombe J.F."/>
            <person name="Gilna P."/>
            <person name="Han C."/>
            <person name="Hill K."/>
            <person name="Hitchcock P."/>
            <person name="Jackson P."/>
            <person name="Keim P."/>
            <person name="Longmire J."/>
            <person name="Lucas S."/>
            <person name="Okinaka R."/>
            <person name="Richardson P."/>
            <person name="Rubin E."/>
            <person name="Tice H."/>
        </authorList>
    </citation>
    <scope>NUCLEOTIDE SEQUENCE [LARGE SCALE GENOMIC DNA]</scope>
    <source>
        <strain>Sterne</strain>
    </source>
</reference>
<keyword id="KW-0067">ATP-binding</keyword>
<keyword id="KW-0436">Ligase</keyword>
<keyword id="KW-0547">Nucleotide-binding</keyword>
<keyword id="KW-0648">Protein biosynthesis</keyword>
<keyword id="KW-1185">Reference proteome</keyword>
<sequence length="96" mass="10866">MSRISVENVKHVAHLARLAITDQEAEKFQKQLDAIVTFAEQLNELDTTDVKPTTHVLTMKNVMREDVPEKGLPVEEVLKNAPDHKDNQIRVPAVLE</sequence>
<comment type="function">
    <text evidence="1">Allows the formation of correctly charged Asn-tRNA(Asn) or Gln-tRNA(Gln) through the transamidation of misacylated Asp-tRNA(Asn) or Glu-tRNA(Gln) in organisms which lack either or both of asparaginyl-tRNA or glutaminyl-tRNA synthetases. The reaction takes place in the presence of glutamine and ATP through an activated phospho-Asp-tRNA(Asn) or phospho-Glu-tRNA(Gln).</text>
</comment>
<comment type="catalytic activity">
    <reaction evidence="1">
        <text>L-glutamyl-tRNA(Gln) + L-glutamine + ATP + H2O = L-glutaminyl-tRNA(Gln) + L-glutamate + ADP + phosphate + H(+)</text>
        <dbReference type="Rhea" id="RHEA:17521"/>
        <dbReference type="Rhea" id="RHEA-COMP:9681"/>
        <dbReference type="Rhea" id="RHEA-COMP:9684"/>
        <dbReference type="ChEBI" id="CHEBI:15377"/>
        <dbReference type="ChEBI" id="CHEBI:15378"/>
        <dbReference type="ChEBI" id="CHEBI:29985"/>
        <dbReference type="ChEBI" id="CHEBI:30616"/>
        <dbReference type="ChEBI" id="CHEBI:43474"/>
        <dbReference type="ChEBI" id="CHEBI:58359"/>
        <dbReference type="ChEBI" id="CHEBI:78520"/>
        <dbReference type="ChEBI" id="CHEBI:78521"/>
        <dbReference type="ChEBI" id="CHEBI:456216"/>
    </reaction>
</comment>
<comment type="catalytic activity">
    <reaction evidence="1">
        <text>L-aspartyl-tRNA(Asn) + L-glutamine + ATP + H2O = L-asparaginyl-tRNA(Asn) + L-glutamate + ADP + phosphate + 2 H(+)</text>
        <dbReference type="Rhea" id="RHEA:14513"/>
        <dbReference type="Rhea" id="RHEA-COMP:9674"/>
        <dbReference type="Rhea" id="RHEA-COMP:9677"/>
        <dbReference type="ChEBI" id="CHEBI:15377"/>
        <dbReference type="ChEBI" id="CHEBI:15378"/>
        <dbReference type="ChEBI" id="CHEBI:29985"/>
        <dbReference type="ChEBI" id="CHEBI:30616"/>
        <dbReference type="ChEBI" id="CHEBI:43474"/>
        <dbReference type="ChEBI" id="CHEBI:58359"/>
        <dbReference type="ChEBI" id="CHEBI:78515"/>
        <dbReference type="ChEBI" id="CHEBI:78516"/>
        <dbReference type="ChEBI" id="CHEBI:456216"/>
    </reaction>
</comment>
<comment type="subunit">
    <text evidence="1">Heterotrimer of A, B and C subunits.</text>
</comment>
<comment type="similarity">
    <text evidence="1">Belongs to the GatC family.</text>
</comment>
<feature type="chain" id="PRO_0000105272" description="Aspartyl/glutamyl-tRNA(Asn/Gln) amidotransferase subunit C">
    <location>
        <begin position="1"/>
        <end position="96"/>
    </location>
</feature>